<reference key="1">
    <citation type="journal article" date="1999" name="Nature">
        <title>Sequence and analysis of chromosome 2 of the plant Arabidopsis thaliana.</title>
        <authorList>
            <person name="Lin X."/>
            <person name="Kaul S."/>
            <person name="Rounsley S.D."/>
            <person name="Shea T.P."/>
            <person name="Benito M.-I."/>
            <person name="Town C.D."/>
            <person name="Fujii C.Y."/>
            <person name="Mason T.M."/>
            <person name="Bowman C.L."/>
            <person name="Barnstead M.E."/>
            <person name="Feldblyum T.V."/>
            <person name="Buell C.R."/>
            <person name="Ketchum K.A."/>
            <person name="Lee J.J."/>
            <person name="Ronning C.M."/>
            <person name="Koo H.L."/>
            <person name="Moffat K.S."/>
            <person name="Cronin L.A."/>
            <person name="Shen M."/>
            <person name="Pai G."/>
            <person name="Van Aken S."/>
            <person name="Umayam L."/>
            <person name="Tallon L.J."/>
            <person name="Gill J.E."/>
            <person name="Adams M.D."/>
            <person name="Carrera A.J."/>
            <person name="Creasy T.H."/>
            <person name="Goodman H.M."/>
            <person name="Somerville C.R."/>
            <person name="Copenhaver G.P."/>
            <person name="Preuss D."/>
            <person name="Nierman W.C."/>
            <person name="White O."/>
            <person name="Eisen J.A."/>
            <person name="Salzberg S.L."/>
            <person name="Fraser C.M."/>
            <person name="Venter J.C."/>
        </authorList>
    </citation>
    <scope>NUCLEOTIDE SEQUENCE [LARGE SCALE GENOMIC DNA]</scope>
    <source>
        <strain>cv. Columbia</strain>
    </source>
</reference>
<reference key="2">
    <citation type="journal article" date="2017" name="Plant J.">
        <title>Araport11: a complete reannotation of the Arabidopsis thaliana reference genome.</title>
        <authorList>
            <person name="Cheng C.Y."/>
            <person name="Krishnakumar V."/>
            <person name="Chan A.P."/>
            <person name="Thibaud-Nissen F."/>
            <person name="Schobel S."/>
            <person name="Town C.D."/>
        </authorList>
    </citation>
    <scope>GENOME REANNOTATION</scope>
    <source>
        <strain>cv. Columbia</strain>
    </source>
</reference>
<reference key="3">
    <citation type="journal article" date="2003" name="Science">
        <title>Empirical analysis of transcriptional activity in the Arabidopsis genome.</title>
        <authorList>
            <person name="Yamada K."/>
            <person name="Lim J."/>
            <person name="Dale J.M."/>
            <person name="Chen H."/>
            <person name="Shinn P."/>
            <person name="Palm C.J."/>
            <person name="Southwick A.M."/>
            <person name="Wu H.C."/>
            <person name="Kim C.J."/>
            <person name="Nguyen M."/>
            <person name="Pham P.K."/>
            <person name="Cheuk R.F."/>
            <person name="Karlin-Newmann G."/>
            <person name="Liu S.X."/>
            <person name="Lam B."/>
            <person name="Sakano H."/>
            <person name="Wu T."/>
            <person name="Yu G."/>
            <person name="Miranda M."/>
            <person name="Quach H.L."/>
            <person name="Tripp M."/>
            <person name="Chang C.H."/>
            <person name="Lee J.M."/>
            <person name="Toriumi M.J."/>
            <person name="Chan M.M."/>
            <person name="Tang C.C."/>
            <person name="Onodera C.S."/>
            <person name="Deng J.M."/>
            <person name="Akiyama K."/>
            <person name="Ansari Y."/>
            <person name="Arakawa T."/>
            <person name="Banh J."/>
            <person name="Banno F."/>
            <person name="Bowser L."/>
            <person name="Brooks S.Y."/>
            <person name="Carninci P."/>
            <person name="Chao Q."/>
            <person name="Choy N."/>
            <person name="Enju A."/>
            <person name="Goldsmith A.D."/>
            <person name="Gurjal M."/>
            <person name="Hansen N.F."/>
            <person name="Hayashizaki Y."/>
            <person name="Johnson-Hopson C."/>
            <person name="Hsuan V.W."/>
            <person name="Iida K."/>
            <person name="Karnes M."/>
            <person name="Khan S."/>
            <person name="Koesema E."/>
            <person name="Ishida J."/>
            <person name="Jiang P.X."/>
            <person name="Jones T."/>
            <person name="Kawai J."/>
            <person name="Kamiya A."/>
            <person name="Meyers C."/>
            <person name="Nakajima M."/>
            <person name="Narusaka M."/>
            <person name="Seki M."/>
            <person name="Sakurai T."/>
            <person name="Satou M."/>
            <person name="Tamse R."/>
            <person name="Vaysberg M."/>
            <person name="Wallender E.K."/>
            <person name="Wong C."/>
            <person name="Yamamura Y."/>
            <person name="Yuan S."/>
            <person name="Shinozaki K."/>
            <person name="Davis R.W."/>
            <person name="Theologis A."/>
            <person name="Ecker J.R."/>
        </authorList>
    </citation>
    <scope>NUCLEOTIDE SEQUENCE [LARGE SCALE MRNA]</scope>
    <source>
        <strain>cv. Columbia</strain>
    </source>
</reference>
<reference key="4">
    <citation type="journal article" date="2009" name="DNA Res.">
        <title>Analysis of multiple occurrences of alternative splicing events in Arabidopsis thaliana using novel sequenced full-length cDNAs.</title>
        <authorList>
            <person name="Iida K."/>
            <person name="Fukami-Kobayashi K."/>
            <person name="Toyoda A."/>
            <person name="Sakaki Y."/>
            <person name="Kobayashi M."/>
            <person name="Seki M."/>
            <person name="Shinozaki K."/>
        </authorList>
    </citation>
    <scope>NUCLEOTIDE SEQUENCE [LARGE SCALE MRNA] OF 150-394</scope>
    <source>
        <strain>cv. Columbia</strain>
    </source>
</reference>
<reference key="5">
    <citation type="journal article" date="2007" name="Plant J.">
        <title>A role for the AtMTP11 gene of Arabidopsis in manganese transport and tolerance.</title>
        <authorList>
            <person name="Delhaize E."/>
            <person name="Gruber B.D."/>
            <person name="Pittman J.K."/>
            <person name="White R.G."/>
            <person name="Leung H."/>
            <person name="Miao Y."/>
            <person name="Jiang L."/>
            <person name="Ryan P.R."/>
            <person name="Richardson A.E."/>
        </authorList>
    </citation>
    <scope>FUNCTION</scope>
    <scope>SUBCELLULAR LOCATION</scope>
    <scope>DISRUPTION PHENOTYPE</scope>
</reference>
<reference key="6">
    <citation type="journal article" date="2007" name="Proc. Natl. Acad. Sci. U.S.A.">
        <title>A secretory pathway-localized cation diffusion facilitator confers plant manganese tolerance.</title>
        <authorList>
            <person name="Peiter E."/>
            <person name="Montanini B."/>
            <person name="Gobert A."/>
            <person name="Pedas P."/>
            <person name="Husted S."/>
            <person name="Maathuis F.J."/>
            <person name="Blaudez D."/>
            <person name="Chalot M."/>
            <person name="Sanders D."/>
        </authorList>
    </citation>
    <scope>FUNCTION</scope>
    <scope>SUBCELLULAR LOCATION</scope>
    <scope>TISSUE SPECIFICITY</scope>
    <scope>DISRUPTION PHENOTYPE</scope>
</reference>
<feature type="chain" id="PRO_0000400007" description="Metal tolerance protein 11">
    <location>
        <begin position="1"/>
        <end position="394"/>
    </location>
</feature>
<feature type="topological domain" description="Cytoplasmic" evidence="1">
    <location>
        <begin position="1"/>
        <end position="103"/>
    </location>
</feature>
<feature type="transmembrane region" description="Helical" evidence="1">
    <location>
        <begin position="104"/>
        <end position="124"/>
    </location>
</feature>
<feature type="topological domain" description="Vacuolar" evidence="1">
    <location>
        <begin position="125"/>
        <end position="130"/>
    </location>
</feature>
<feature type="transmembrane region" description="Helical" evidence="1">
    <location>
        <begin position="131"/>
        <end position="151"/>
    </location>
</feature>
<feature type="topological domain" description="Cytoplasmic" evidence="1">
    <location>
        <begin position="152"/>
        <end position="172"/>
    </location>
</feature>
<feature type="transmembrane region" description="Helical" evidence="1">
    <location>
        <begin position="173"/>
        <end position="193"/>
    </location>
</feature>
<feature type="topological domain" description="Vacuolar" evidence="1">
    <location>
        <begin position="194"/>
        <end position="212"/>
    </location>
</feature>
<feature type="transmembrane region" description="Helical" evidence="1">
    <location>
        <begin position="213"/>
        <end position="233"/>
    </location>
</feature>
<feature type="topological domain" description="Cytoplasmic" evidence="1">
    <location>
        <begin position="234"/>
        <end position="251"/>
    </location>
</feature>
<feature type="transmembrane region" description="Helical" evidence="1">
    <location>
        <begin position="252"/>
        <end position="272"/>
    </location>
</feature>
<feature type="topological domain" description="Vacuolar" evidence="1">
    <location>
        <position position="273"/>
    </location>
</feature>
<feature type="transmembrane region" description="Helical" evidence="1">
    <location>
        <begin position="274"/>
        <end position="294"/>
    </location>
</feature>
<feature type="topological domain" description="Cytoplasmic" evidence="1">
    <location>
        <begin position="295"/>
        <end position="394"/>
    </location>
</feature>
<organism>
    <name type="scientific">Arabidopsis thaliana</name>
    <name type="common">Mouse-ear cress</name>
    <dbReference type="NCBI Taxonomy" id="3702"/>
    <lineage>
        <taxon>Eukaryota</taxon>
        <taxon>Viridiplantae</taxon>
        <taxon>Streptophyta</taxon>
        <taxon>Embryophyta</taxon>
        <taxon>Tracheophyta</taxon>
        <taxon>Spermatophyta</taxon>
        <taxon>Magnoliopsida</taxon>
        <taxon>eudicotyledons</taxon>
        <taxon>Gunneridae</taxon>
        <taxon>Pentapetalae</taxon>
        <taxon>rosids</taxon>
        <taxon>malvids</taxon>
        <taxon>Brassicales</taxon>
        <taxon>Brassicaceae</taxon>
        <taxon>Camelineae</taxon>
        <taxon>Arabidopsis</taxon>
    </lineage>
</organism>
<comment type="function">
    <text evidence="2 3">Cation/proton antiporter involved in endogenous manganese tolerance probably through vesicular trafficking and exocytosis.</text>
</comment>
<comment type="subcellular location">
    <subcellularLocation>
        <location>Prevacuolar compartment membrane</location>
    </subcellularLocation>
    <subcellularLocation>
        <location>Golgi apparatus membrane</location>
        <topology>Multi-pass membrane protein</topology>
    </subcellularLocation>
</comment>
<comment type="tissue specificity">
    <text evidence="2">Widely expressed.</text>
</comment>
<comment type="disruption phenotype">
    <text evidence="2 3">Increased accumulation of manganese and hypersensitivity to elevated levels of manganese.</text>
</comment>
<comment type="similarity">
    <text evidence="4">Belongs to the cation diffusion facilitator (CDF) transporter (TC 2.A.4) family. SLC30A subfamily.</text>
</comment>
<name>MTP11_ARATH</name>
<keyword id="KW-0333">Golgi apparatus</keyword>
<keyword id="KW-0406">Ion transport</keyword>
<keyword id="KW-0472">Membrane</keyword>
<keyword id="KW-1185">Reference proteome</keyword>
<keyword id="KW-0812">Transmembrane</keyword>
<keyword id="KW-1133">Transmembrane helix</keyword>
<keyword id="KW-0813">Transport</keyword>
<proteinExistence type="evidence at transcript level"/>
<evidence type="ECO:0000255" key="1"/>
<evidence type="ECO:0000269" key="2">
    <source>
    </source>
</evidence>
<evidence type="ECO:0000269" key="3">
    <source>
    </source>
</evidence>
<evidence type="ECO:0000305" key="4"/>
<gene>
    <name type="primary">MTP11</name>
    <name type="ordered locus">At2g39450</name>
    <name type="ORF">F12L6.11</name>
</gene>
<accession>O80632</accession>
<accession>B9DI01</accession>
<dbReference type="EMBL" id="AC004218">
    <property type="protein sequence ID" value="AAC27836.1"/>
    <property type="molecule type" value="Genomic_DNA"/>
</dbReference>
<dbReference type="EMBL" id="CP002685">
    <property type="protein sequence ID" value="AEC09679.1"/>
    <property type="molecule type" value="Genomic_DNA"/>
</dbReference>
<dbReference type="EMBL" id="AY136449">
    <property type="protein sequence ID" value="AAM97114.1"/>
    <property type="molecule type" value="mRNA"/>
</dbReference>
<dbReference type="EMBL" id="BT008477">
    <property type="protein sequence ID" value="AAP37836.1"/>
    <property type="molecule type" value="mRNA"/>
</dbReference>
<dbReference type="EMBL" id="AK317710">
    <property type="protein sequence ID" value="BAH20368.1"/>
    <property type="molecule type" value="mRNA"/>
</dbReference>
<dbReference type="PIR" id="T00555">
    <property type="entry name" value="T00555"/>
</dbReference>
<dbReference type="RefSeq" id="NP_181477.1">
    <property type="nucleotide sequence ID" value="NM_129503.4"/>
</dbReference>
<dbReference type="SMR" id="O80632"/>
<dbReference type="BioGRID" id="3868">
    <property type="interactions" value="2"/>
</dbReference>
<dbReference type="FunCoup" id="O80632">
    <property type="interactions" value="91"/>
</dbReference>
<dbReference type="IntAct" id="O80632">
    <property type="interactions" value="3"/>
</dbReference>
<dbReference type="STRING" id="3702.O80632"/>
<dbReference type="TCDB" id="2.A.4.5.5">
    <property type="family name" value="the cation diffusion facilitator (cdf) family"/>
</dbReference>
<dbReference type="PaxDb" id="3702-AT2G39450.1"/>
<dbReference type="ProteomicsDB" id="251306"/>
<dbReference type="EnsemblPlants" id="AT2G39450.1">
    <property type="protein sequence ID" value="AT2G39450.1"/>
    <property type="gene ID" value="AT2G39450"/>
</dbReference>
<dbReference type="GeneID" id="818530"/>
<dbReference type="Gramene" id="AT2G39450.1">
    <property type="protein sequence ID" value="AT2G39450.1"/>
    <property type="gene ID" value="AT2G39450"/>
</dbReference>
<dbReference type="KEGG" id="ath:AT2G39450"/>
<dbReference type="Araport" id="AT2G39450"/>
<dbReference type="TAIR" id="AT2G39450">
    <property type="gene designation" value="MTP11"/>
</dbReference>
<dbReference type="eggNOG" id="KOG1485">
    <property type="taxonomic scope" value="Eukaryota"/>
</dbReference>
<dbReference type="HOGENOM" id="CLU_013430_2_3_1"/>
<dbReference type="InParanoid" id="O80632"/>
<dbReference type="OMA" id="CWALRNQ"/>
<dbReference type="OrthoDB" id="78296at2759"/>
<dbReference type="PhylomeDB" id="O80632"/>
<dbReference type="PRO" id="PR:O80632"/>
<dbReference type="Proteomes" id="UP000006548">
    <property type="component" value="Chromosome 2"/>
</dbReference>
<dbReference type="ExpressionAtlas" id="O80632">
    <property type="expression patterns" value="baseline and differential"/>
</dbReference>
<dbReference type="GO" id="GO:0005794">
    <property type="term" value="C:Golgi apparatus"/>
    <property type="evidence" value="ECO:0000314"/>
    <property type="project" value="TAIR"/>
</dbReference>
<dbReference type="GO" id="GO:0000139">
    <property type="term" value="C:Golgi membrane"/>
    <property type="evidence" value="ECO:0007669"/>
    <property type="project" value="UniProtKB-SubCell"/>
</dbReference>
<dbReference type="GO" id="GO:0005770">
    <property type="term" value="C:late endosome"/>
    <property type="evidence" value="ECO:0000314"/>
    <property type="project" value="TAIR"/>
</dbReference>
<dbReference type="GO" id="GO:0005384">
    <property type="term" value="F:manganese ion transmembrane transporter activity"/>
    <property type="evidence" value="ECO:0000314"/>
    <property type="project" value="TAIR"/>
</dbReference>
<dbReference type="GO" id="GO:0010486">
    <property type="term" value="F:manganese:proton antiporter activity"/>
    <property type="evidence" value="ECO:0000314"/>
    <property type="project" value="TAIR"/>
</dbReference>
<dbReference type="GO" id="GO:0030026">
    <property type="term" value="P:intracellular manganese ion homeostasis"/>
    <property type="evidence" value="ECO:0000315"/>
    <property type="project" value="TAIR"/>
</dbReference>
<dbReference type="GO" id="GO:0046688">
    <property type="term" value="P:response to copper ion"/>
    <property type="evidence" value="ECO:0000314"/>
    <property type="project" value="TAIR"/>
</dbReference>
<dbReference type="GO" id="GO:0010042">
    <property type="term" value="P:response to manganese ion"/>
    <property type="evidence" value="ECO:0000314"/>
    <property type="project" value="TAIR"/>
</dbReference>
<dbReference type="FunFam" id="1.20.1510.10:FF:000003">
    <property type="entry name" value="Metal tolerance protein 11"/>
    <property type="match status" value="1"/>
</dbReference>
<dbReference type="FunFam" id="3.30.70.1350:FF:000001">
    <property type="entry name" value="Metal tolerance protein 11"/>
    <property type="match status" value="1"/>
</dbReference>
<dbReference type="Gene3D" id="1.20.1510.10">
    <property type="entry name" value="Cation efflux protein transmembrane domain"/>
    <property type="match status" value="1"/>
</dbReference>
<dbReference type="Gene3D" id="3.30.70.1350">
    <property type="entry name" value="Cation efflux protein, cytoplasmic domain"/>
    <property type="match status" value="1"/>
</dbReference>
<dbReference type="InterPro" id="IPR002524">
    <property type="entry name" value="Cation_efflux"/>
</dbReference>
<dbReference type="InterPro" id="IPR027470">
    <property type="entry name" value="Cation_efflux_CTD"/>
</dbReference>
<dbReference type="InterPro" id="IPR036837">
    <property type="entry name" value="Cation_efflux_CTD_sf"/>
</dbReference>
<dbReference type="InterPro" id="IPR027469">
    <property type="entry name" value="Cation_efflux_TMD_sf"/>
</dbReference>
<dbReference type="InterPro" id="IPR050291">
    <property type="entry name" value="CDF_Transporter"/>
</dbReference>
<dbReference type="NCBIfam" id="TIGR01297">
    <property type="entry name" value="CDF"/>
    <property type="match status" value="1"/>
</dbReference>
<dbReference type="PANTHER" id="PTHR43840:SF5">
    <property type="entry name" value="METAL TOLERANCE PROTEIN 11"/>
    <property type="match status" value="1"/>
</dbReference>
<dbReference type="PANTHER" id="PTHR43840">
    <property type="entry name" value="MITOCHONDRIAL METAL TRANSPORTER 1-RELATED"/>
    <property type="match status" value="1"/>
</dbReference>
<dbReference type="Pfam" id="PF01545">
    <property type="entry name" value="Cation_efflux"/>
    <property type="match status" value="1"/>
</dbReference>
<dbReference type="Pfam" id="PF16916">
    <property type="entry name" value="ZT_dimer"/>
    <property type="match status" value="1"/>
</dbReference>
<dbReference type="SUPFAM" id="SSF160240">
    <property type="entry name" value="Cation efflux protein cytoplasmic domain-like"/>
    <property type="match status" value="1"/>
</dbReference>
<dbReference type="SUPFAM" id="SSF161111">
    <property type="entry name" value="Cation efflux protein transmembrane domain-like"/>
    <property type="match status" value="1"/>
</dbReference>
<sequence>MVEPASPDSDEGISLLEFHGNGDRSWQLNFDDFQVSPEHKEKKSPSKLHNCLGCLGPEDNVADYYQQQVEMLEGFTEMDELAERGFVPGMSKEEQDNLAKSETLAIRISNIANMLLFAAKVYASVTSGSLAIIASTLDSLLDLLSGFILWFTAFSMQTPNPYQYPIGKKRMQPLGILVFASVMATLGLQIILESLRTMLSSHKEFNLTKEQESWVVGIMLSVTLVKLLLVLYCRSFTNEIVKAYAQDHFFDVITNIIGLIAVILANYIDYWIDPVGAIILALYTIRTWSMTVLENVNSLVGKSARPEYLQKLTYLCWNHHKAIRHIDTVRAYTFGSHYFVEVDIVLPADMPLQVAHDIGESLQEKLELLEEIERAFVHLDYEYTHKPEHARSHC</sequence>
<protein>
    <recommendedName>
        <fullName>Metal tolerance protein 11</fullName>
        <shortName>AtMTP11</shortName>
    </recommendedName>
</protein>